<proteinExistence type="inferred from homology"/>
<reference key="1">
    <citation type="journal article" date="2007" name="Genome Res.">
        <title>Genome sequence of a proteolytic (Group I) Clostridium botulinum strain Hall A and comparative analysis of the clostridial genomes.</title>
        <authorList>
            <person name="Sebaihia M."/>
            <person name="Peck M.W."/>
            <person name="Minton N.P."/>
            <person name="Thomson N.R."/>
            <person name="Holden M.T.G."/>
            <person name="Mitchell W.J."/>
            <person name="Carter A.T."/>
            <person name="Bentley S.D."/>
            <person name="Mason D.R."/>
            <person name="Crossman L."/>
            <person name="Paul C.J."/>
            <person name="Ivens A."/>
            <person name="Wells-Bennik M.H.J."/>
            <person name="Davis I.J."/>
            <person name="Cerdeno-Tarraga A.M."/>
            <person name="Churcher C."/>
            <person name="Quail M.A."/>
            <person name="Chillingworth T."/>
            <person name="Feltwell T."/>
            <person name="Fraser A."/>
            <person name="Goodhead I."/>
            <person name="Hance Z."/>
            <person name="Jagels K."/>
            <person name="Larke N."/>
            <person name="Maddison M."/>
            <person name="Moule S."/>
            <person name="Mungall K."/>
            <person name="Norbertczak H."/>
            <person name="Rabbinowitsch E."/>
            <person name="Sanders M."/>
            <person name="Simmonds M."/>
            <person name="White B."/>
            <person name="Whithead S."/>
            <person name="Parkhill J."/>
        </authorList>
    </citation>
    <scope>NUCLEOTIDE SEQUENCE [LARGE SCALE GENOMIC DNA]</scope>
    <source>
        <strain>Hall / ATCC 3502 / NCTC 13319 / Type A</strain>
    </source>
</reference>
<reference key="2">
    <citation type="journal article" date="2007" name="PLoS ONE">
        <title>Analysis of the neurotoxin complex genes in Clostridium botulinum A1-A4 and B1 strains: BoNT/A3, /Ba4 and /B1 clusters are located within plasmids.</title>
        <authorList>
            <person name="Smith T.J."/>
            <person name="Hill K.K."/>
            <person name="Foley B.T."/>
            <person name="Detter J.C."/>
            <person name="Munk A.C."/>
            <person name="Bruce D.C."/>
            <person name="Doggett N.A."/>
            <person name="Smith L.A."/>
            <person name="Marks J.D."/>
            <person name="Xie G."/>
            <person name="Brettin T.S."/>
        </authorList>
    </citation>
    <scope>NUCLEOTIDE SEQUENCE [LARGE SCALE GENOMIC DNA]</scope>
    <source>
        <strain>Hall / ATCC 3502 / NCTC 13319 / Type A</strain>
    </source>
</reference>
<gene>
    <name evidence="1" type="primary">rplO</name>
    <name type="ordered locus">CBO3462</name>
    <name type="ordered locus">CLC_3406</name>
</gene>
<keyword id="KW-1185">Reference proteome</keyword>
<keyword id="KW-0687">Ribonucleoprotein</keyword>
<keyword id="KW-0689">Ribosomal protein</keyword>
<keyword id="KW-0694">RNA-binding</keyword>
<keyword id="KW-0699">rRNA-binding</keyword>
<name>RL15_CLOBH</name>
<comment type="function">
    <text evidence="1">Binds to the 23S rRNA.</text>
</comment>
<comment type="subunit">
    <text evidence="1">Part of the 50S ribosomal subunit.</text>
</comment>
<comment type="similarity">
    <text evidence="1">Belongs to the universal ribosomal protein uL15 family.</text>
</comment>
<dbReference type="EMBL" id="CP000727">
    <property type="protein sequence ID" value="ABS37025.1"/>
    <property type="molecule type" value="Genomic_DNA"/>
</dbReference>
<dbReference type="EMBL" id="AM412317">
    <property type="protein sequence ID" value="CAL85022.1"/>
    <property type="molecule type" value="Genomic_DNA"/>
</dbReference>
<dbReference type="RefSeq" id="WP_003357513.1">
    <property type="nucleotide sequence ID" value="NC_009698.1"/>
</dbReference>
<dbReference type="RefSeq" id="YP_001255943.1">
    <property type="nucleotide sequence ID" value="NC_009495.1"/>
</dbReference>
<dbReference type="RefSeq" id="YP_001389184.1">
    <property type="nucleotide sequence ID" value="NC_009698.1"/>
</dbReference>
<dbReference type="SMR" id="A5I7I7"/>
<dbReference type="GeneID" id="92940231"/>
<dbReference type="KEGG" id="cbh:CLC_3406"/>
<dbReference type="KEGG" id="cbo:CBO3462"/>
<dbReference type="PATRIC" id="fig|413999.7.peg.3438"/>
<dbReference type="HOGENOM" id="CLU_055188_4_2_9"/>
<dbReference type="PRO" id="PR:A5I7I7"/>
<dbReference type="Proteomes" id="UP000001986">
    <property type="component" value="Chromosome"/>
</dbReference>
<dbReference type="GO" id="GO:0022625">
    <property type="term" value="C:cytosolic large ribosomal subunit"/>
    <property type="evidence" value="ECO:0000318"/>
    <property type="project" value="GO_Central"/>
</dbReference>
<dbReference type="GO" id="GO:0019843">
    <property type="term" value="F:rRNA binding"/>
    <property type="evidence" value="ECO:0007669"/>
    <property type="project" value="UniProtKB-UniRule"/>
</dbReference>
<dbReference type="GO" id="GO:0003735">
    <property type="term" value="F:structural constituent of ribosome"/>
    <property type="evidence" value="ECO:0000318"/>
    <property type="project" value="GO_Central"/>
</dbReference>
<dbReference type="GO" id="GO:0006412">
    <property type="term" value="P:translation"/>
    <property type="evidence" value="ECO:0007669"/>
    <property type="project" value="UniProtKB-UniRule"/>
</dbReference>
<dbReference type="Gene3D" id="3.100.10.10">
    <property type="match status" value="1"/>
</dbReference>
<dbReference type="HAMAP" id="MF_01341">
    <property type="entry name" value="Ribosomal_uL15"/>
    <property type="match status" value="1"/>
</dbReference>
<dbReference type="InterPro" id="IPR030878">
    <property type="entry name" value="Ribosomal_uL15"/>
</dbReference>
<dbReference type="InterPro" id="IPR021131">
    <property type="entry name" value="Ribosomal_uL15/eL18"/>
</dbReference>
<dbReference type="InterPro" id="IPR036227">
    <property type="entry name" value="Ribosomal_uL15/eL18_sf"/>
</dbReference>
<dbReference type="InterPro" id="IPR005749">
    <property type="entry name" value="Ribosomal_uL15_bac-type"/>
</dbReference>
<dbReference type="InterPro" id="IPR001196">
    <property type="entry name" value="Ribosomal_uL15_CS"/>
</dbReference>
<dbReference type="NCBIfam" id="TIGR01071">
    <property type="entry name" value="rplO_bact"/>
    <property type="match status" value="1"/>
</dbReference>
<dbReference type="PANTHER" id="PTHR12934">
    <property type="entry name" value="50S RIBOSOMAL PROTEIN L15"/>
    <property type="match status" value="1"/>
</dbReference>
<dbReference type="PANTHER" id="PTHR12934:SF11">
    <property type="entry name" value="LARGE RIBOSOMAL SUBUNIT PROTEIN UL15M"/>
    <property type="match status" value="1"/>
</dbReference>
<dbReference type="Pfam" id="PF00828">
    <property type="entry name" value="Ribosomal_L27A"/>
    <property type="match status" value="1"/>
</dbReference>
<dbReference type="SUPFAM" id="SSF52080">
    <property type="entry name" value="Ribosomal proteins L15p and L18e"/>
    <property type="match status" value="1"/>
</dbReference>
<dbReference type="PROSITE" id="PS00475">
    <property type="entry name" value="RIBOSOMAL_L15"/>
    <property type="match status" value="1"/>
</dbReference>
<feature type="chain" id="PRO_1000054449" description="Large ribosomal subunit protein uL15">
    <location>
        <begin position="1"/>
        <end position="146"/>
    </location>
</feature>
<feature type="region of interest" description="Disordered" evidence="2">
    <location>
        <begin position="1"/>
        <end position="56"/>
    </location>
</feature>
<feature type="compositionally biased region" description="Gly residues" evidence="2">
    <location>
        <begin position="21"/>
        <end position="35"/>
    </location>
</feature>
<feature type="compositionally biased region" description="Gly residues" evidence="2">
    <location>
        <begin position="42"/>
        <end position="52"/>
    </location>
</feature>
<evidence type="ECO:0000255" key="1">
    <source>
        <dbReference type="HAMAP-Rule" id="MF_01341"/>
    </source>
</evidence>
<evidence type="ECO:0000256" key="2">
    <source>
        <dbReference type="SAM" id="MobiDB-lite"/>
    </source>
</evidence>
<evidence type="ECO:0000305" key="3"/>
<organism>
    <name type="scientific">Clostridium botulinum (strain Hall / ATCC 3502 / NCTC 13319 / Type A)</name>
    <dbReference type="NCBI Taxonomy" id="441771"/>
    <lineage>
        <taxon>Bacteria</taxon>
        <taxon>Bacillati</taxon>
        <taxon>Bacillota</taxon>
        <taxon>Clostridia</taxon>
        <taxon>Eubacteriales</taxon>
        <taxon>Clostridiaceae</taxon>
        <taxon>Clostridium</taxon>
    </lineage>
</organism>
<accession>A5I7I7</accession>
<accession>A7G8R9</accession>
<sequence>MKLHELKAAEGANKASKRVGRGTGSGLGKTSGRGQNGQNSRSGGGVRPGFEGGQMPLYRRLPKRGFKNIFAKEYAAINLDRLNCFEDGTVVTPELLVEKRVVKKVKDGVKILGNGNIEKKLTVKAAKFSKSAIEKIEAAGGKVEVI</sequence>
<protein>
    <recommendedName>
        <fullName evidence="1">Large ribosomal subunit protein uL15</fullName>
    </recommendedName>
    <alternativeName>
        <fullName evidence="3">50S ribosomal protein L15</fullName>
    </alternativeName>
</protein>